<keyword id="KW-0150">Chloroplast</keyword>
<keyword id="KW-0378">Hydrolase</keyword>
<keyword id="KW-0934">Plastid</keyword>
<keyword id="KW-0645">Protease</keyword>
<keyword id="KW-0720">Serine protease</keyword>
<gene>
    <name evidence="1" type="primary">clpP</name>
</gene>
<sequence length="196" mass="22082">MPIGVPKVPFRSPGEEDASWVDVYNRLYRERLLFLGQEVDSEISNQLIGLMVYLSIEDETKDLYLFINSPGGWVIPGVAIYDTMQFVRPDVHTICMGLAASMGSFILVGGEITKRLAFPHARVMIHQPASSFYEAQTGEFVLEAEELLKLRETLTRVYVQRTGKPLWVVSEDMERDVFMSATEAQAYGIVDLVAVE</sequence>
<evidence type="ECO:0000255" key="1">
    <source>
        <dbReference type="HAMAP-Rule" id="MF_00444"/>
    </source>
</evidence>
<reference key="1">
    <citation type="journal article" date="2006" name="Mol. Genet. Genomics">
        <title>The chloroplast genome of Nicotiana sylvestris and Nicotiana tomentosiformis: complete sequencing confirms that the Nicotiana sylvestris progenitor is the maternal genome donor of Nicotiana tabacum.</title>
        <authorList>
            <person name="Yukawa M."/>
            <person name="Tsudzuki T."/>
            <person name="Sugiura M."/>
        </authorList>
    </citation>
    <scope>NUCLEOTIDE SEQUENCE [LARGE SCALE GENOMIC DNA]</scope>
</reference>
<dbReference type="EC" id="3.4.21.92" evidence="1"/>
<dbReference type="EMBL" id="AB240139">
    <property type="protein sequence ID" value="BAE48028.1"/>
    <property type="molecule type" value="Genomic_DNA"/>
</dbReference>
<dbReference type="RefSeq" id="YP_398889.1">
    <property type="nucleotide sequence ID" value="NC_007602.1"/>
</dbReference>
<dbReference type="SMR" id="Q33C07"/>
<dbReference type="MEROPS" id="S14.002"/>
<dbReference type="GeneID" id="3776344"/>
<dbReference type="KEGG" id="nto:3776344"/>
<dbReference type="OrthoDB" id="1882605at2759"/>
<dbReference type="GO" id="GO:0009570">
    <property type="term" value="C:chloroplast stroma"/>
    <property type="evidence" value="ECO:0007669"/>
    <property type="project" value="UniProtKB-SubCell"/>
</dbReference>
<dbReference type="GO" id="GO:0009368">
    <property type="term" value="C:endopeptidase Clp complex"/>
    <property type="evidence" value="ECO:0007669"/>
    <property type="project" value="TreeGrafter"/>
</dbReference>
<dbReference type="GO" id="GO:0004176">
    <property type="term" value="F:ATP-dependent peptidase activity"/>
    <property type="evidence" value="ECO:0007669"/>
    <property type="project" value="InterPro"/>
</dbReference>
<dbReference type="GO" id="GO:0051117">
    <property type="term" value="F:ATPase binding"/>
    <property type="evidence" value="ECO:0007669"/>
    <property type="project" value="TreeGrafter"/>
</dbReference>
<dbReference type="GO" id="GO:0004252">
    <property type="term" value="F:serine-type endopeptidase activity"/>
    <property type="evidence" value="ECO:0007669"/>
    <property type="project" value="UniProtKB-UniRule"/>
</dbReference>
<dbReference type="GO" id="GO:0006515">
    <property type="term" value="P:protein quality control for misfolded or incompletely synthesized proteins"/>
    <property type="evidence" value="ECO:0007669"/>
    <property type="project" value="TreeGrafter"/>
</dbReference>
<dbReference type="CDD" id="cd07017">
    <property type="entry name" value="S14_ClpP_2"/>
    <property type="match status" value="1"/>
</dbReference>
<dbReference type="FunFam" id="3.90.226.10:FF:000006">
    <property type="entry name" value="ATP-dependent Clp protease proteolytic subunit"/>
    <property type="match status" value="1"/>
</dbReference>
<dbReference type="Gene3D" id="3.90.226.10">
    <property type="entry name" value="2-enoyl-CoA Hydratase, Chain A, domain 1"/>
    <property type="match status" value="1"/>
</dbReference>
<dbReference type="HAMAP" id="MF_00444">
    <property type="entry name" value="ClpP"/>
    <property type="match status" value="1"/>
</dbReference>
<dbReference type="InterPro" id="IPR001907">
    <property type="entry name" value="ClpP"/>
</dbReference>
<dbReference type="InterPro" id="IPR029045">
    <property type="entry name" value="ClpP/crotonase-like_dom_sf"/>
</dbReference>
<dbReference type="InterPro" id="IPR023562">
    <property type="entry name" value="ClpP/TepA"/>
</dbReference>
<dbReference type="InterPro" id="IPR033135">
    <property type="entry name" value="ClpP_His_AS"/>
</dbReference>
<dbReference type="InterPro" id="IPR018215">
    <property type="entry name" value="ClpP_Ser_AS"/>
</dbReference>
<dbReference type="PANTHER" id="PTHR10381">
    <property type="entry name" value="ATP-DEPENDENT CLP PROTEASE PROTEOLYTIC SUBUNIT"/>
    <property type="match status" value="1"/>
</dbReference>
<dbReference type="PANTHER" id="PTHR10381:SF15">
    <property type="entry name" value="CHLOROPLASTIC ATP-DEPENDENT CLP PROTEASE PROTEOLYTIC SUBUNIT 1"/>
    <property type="match status" value="1"/>
</dbReference>
<dbReference type="Pfam" id="PF00574">
    <property type="entry name" value="CLP_protease"/>
    <property type="match status" value="1"/>
</dbReference>
<dbReference type="PRINTS" id="PR00127">
    <property type="entry name" value="CLPPROTEASEP"/>
</dbReference>
<dbReference type="SUPFAM" id="SSF52096">
    <property type="entry name" value="ClpP/crotonase"/>
    <property type="match status" value="1"/>
</dbReference>
<dbReference type="PROSITE" id="PS00382">
    <property type="entry name" value="CLP_PROTEASE_HIS"/>
    <property type="match status" value="1"/>
</dbReference>
<dbReference type="PROSITE" id="PS00381">
    <property type="entry name" value="CLP_PROTEASE_SER"/>
    <property type="match status" value="1"/>
</dbReference>
<feature type="chain" id="PRO_0000275293" description="ATP-dependent Clp protease proteolytic subunit">
    <location>
        <begin position="1"/>
        <end position="196"/>
    </location>
</feature>
<feature type="active site" description="Nucleophile" evidence="1">
    <location>
        <position position="101"/>
    </location>
</feature>
<feature type="active site" evidence="1">
    <location>
        <position position="126"/>
    </location>
</feature>
<comment type="function">
    <text evidence="1">Cleaves peptides in various proteins in a process that requires ATP hydrolysis. Has a chymotrypsin-like activity. Plays a major role in the degradation of misfolded proteins.</text>
</comment>
<comment type="catalytic activity">
    <reaction evidence="1">
        <text>Hydrolysis of proteins to small peptides in the presence of ATP and magnesium. alpha-casein is the usual test substrate. In the absence of ATP, only oligopeptides shorter than five residues are hydrolyzed (such as succinyl-Leu-Tyr-|-NHMec, and Leu-Tyr-Leu-|-Tyr-Trp, in which cleavage of the -Tyr-|-Leu- and -Tyr-|-Trp bonds also occurs).</text>
        <dbReference type="EC" id="3.4.21.92"/>
    </reaction>
</comment>
<comment type="subunit">
    <text>Component of the chloroplastic Clp protease core complex.</text>
</comment>
<comment type="subcellular location">
    <subcellularLocation>
        <location evidence="1">Plastid</location>
        <location evidence="1">Chloroplast stroma</location>
    </subcellularLocation>
</comment>
<comment type="similarity">
    <text evidence="1">Belongs to the peptidase S14 family.</text>
</comment>
<name>CLPP_NICTO</name>
<organism>
    <name type="scientific">Nicotiana tomentosiformis</name>
    <name type="common">Tobacco</name>
    <dbReference type="NCBI Taxonomy" id="4098"/>
    <lineage>
        <taxon>Eukaryota</taxon>
        <taxon>Viridiplantae</taxon>
        <taxon>Streptophyta</taxon>
        <taxon>Embryophyta</taxon>
        <taxon>Tracheophyta</taxon>
        <taxon>Spermatophyta</taxon>
        <taxon>Magnoliopsida</taxon>
        <taxon>eudicotyledons</taxon>
        <taxon>Gunneridae</taxon>
        <taxon>Pentapetalae</taxon>
        <taxon>asterids</taxon>
        <taxon>lamiids</taxon>
        <taxon>Solanales</taxon>
        <taxon>Solanaceae</taxon>
        <taxon>Nicotianoideae</taxon>
        <taxon>Nicotianeae</taxon>
        <taxon>Nicotiana</taxon>
    </lineage>
</organism>
<protein>
    <recommendedName>
        <fullName evidence="1">ATP-dependent Clp protease proteolytic subunit</fullName>
        <ecNumber evidence="1">3.4.21.92</ecNumber>
    </recommendedName>
    <alternativeName>
        <fullName evidence="1">Endopeptidase Clp</fullName>
    </alternativeName>
</protein>
<proteinExistence type="inferred from homology"/>
<geneLocation type="chloroplast"/>
<accession>Q33C07</accession>